<evidence type="ECO:0000250" key="1">
    <source>
        <dbReference type="UniProtKB" id="A4GXA9"/>
    </source>
</evidence>
<evidence type="ECO:0000256" key="2">
    <source>
        <dbReference type="SAM" id="MobiDB-lite"/>
    </source>
</evidence>
<evidence type="ECO:0000305" key="3"/>
<evidence type="ECO:0000312" key="4">
    <source>
        <dbReference type="MGI" id="MGI:1919889"/>
    </source>
</evidence>
<accession>Q56A04</accession>
<dbReference type="EMBL" id="AC166102">
    <property type="status" value="NOT_ANNOTATED_CDS"/>
    <property type="molecule type" value="Genomic_DNA"/>
</dbReference>
<dbReference type="EMBL" id="BC092228">
    <property type="protein sequence ID" value="AAH92228.1"/>
    <property type="molecule type" value="mRNA"/>
</dbReference>
<dbReference type="CCDS" id="CCDS50023.1"/>
<dbReference type="RefSeq" id="NP_001156574.1">
    <property type="nucleotide sequence ID" value="NM_001163102.1"/>
</dbReference>
<dbReference type="SMR" id="Q56A04"/>
<dbReference type="ComplexPortal" id="CPX-587">
    <property type="entry name" value="MUS81-EME2 structure-specific endonuclease complex"/>
</dbReference>
<dbReference type="FunCoup" id="Q56A04">
    <property type="interactions" value="148"/>
</dbReference>
<dbReference type="STRING" id="10090.ENSMUSP00000113936"/>
<dbReference type="PhosphoSitePlus" id="Q56A04"/>
<dbReference type="PaxDb" id="10090-ENSMUSP00000113936"/>
<dbReference type="PeptideAtlas" id="Q56A04"/>
<dbReference type="ProteomicsDB" id="277833"/>
<dbReference type="Antibodypedia" id="65797">
    <property type="antibodies" value="86 antibodies from 15 providers"/>
</dbReference>
<dbReference type="Ensembl" id="ENSMUST00000121542.2">
    <property type="protein sequence ID" value="ENSMUSP00000113936.2"/>
    <property type="gene ID" value="ENSMUSG00000073436.12"/>
</dbReference>
<dbReference type="GeneID" id="193838"/>
<dbReference type="KEGG" id="mmu:193838"/>
<dbReference type="UCSC" id="uc008ayw.2">
    <property type="organism name" value="mouse"/>
</dbReference>
<dbReference type="AGR" id="MGI:1919889"/>
<dbReference type="CTD" id="197342"/>
<dbReference type="MGI" id="MGI:1919889">
    <property type="gene designation" value="Eme2"/>
</dbReference>
<dbReference type="VEuPathDB" id="HostDB:ENSMUSG00000073436"/>
<dbReference type="eggNOG" id="ENOG502RQYN">
    <property type="taxonomic scope" value="Eukaryota"/>
</dbReference>
<dbReference type="GeneTree" id="ENSGT00530000063937"/>
<dbReference type="HOGENOM" id="CLU_034099_1_0_1"/>
<dbReference type="InParanoid" id="Q56A04"/>
<dbReference type="OMA" id="VWAAGEQ"/>
<dbReference type="OrthoDB" id="343092at2759"/>
<dbReference type="PhylomeDB" id="Q56A04"/>
<dbReference type="TreeFam" id="TF325310"/>
<dbReference type="Reactome" id="R-MMU-5693568">
    <property type="pathway name" value="Resolution of D-loop Structures through Holliday Junction Intermediates"/>
</dbReference>
<dbReference type="Reactome" id="R-MMU-6783310">
    <property type="pathway name" value="Fanconi Anemia Pathway"/>
</dbReference>
<dbReference type="BioGRID-ORCS" id="193838">
    <property type="hits" value="2 hits in 116 CRISPR screens"/>
</dbReference>
<dbReference type="PRO" id="PR:Q56A04"/>
<dbReference type="Proteomes" id="UP000000589">
    <property type="component" value="Chromosome 17"/>
</dbReference>
<dbReference type="RNAct" id="Q56A04">
    <property type="molecule type" value="protein"/>
</dbReference>
<dbReference type="Bgee" id="ENSMUSG00000073436">
    <property type="expression patterns" value="Expressed in humerus cartilage element and 161 other cell types or tissues"/>
</dbReference>
<dbReference type="ExpressionAtlas" id="Q56A04">
    <property type="expression patterns" value="baseline and differential"/>
</dbReference>
<dbReference type="GO" id="GO:1905347">
    <property type="term" value="C:endodeoxyribonuclease complex"/>
    <property type="evidence" value="ECO:0000266"/>
    <property type="project" value="ComplexPortal"/>
</dbReference>
<dbReference type="GO" id="GO:0048476">
    <property type="term" value="C:Holliday junction resolvase complex"/>
    <property type="evidence" value="ECO:0007669"/>
    <property type="project" value="InterPro"/>
</dbReference>
<dbReference type="GO" id="GO:0043596">
    <property type="term" value="C:nuclear replication fork"/>
    <property type="evidence" value="ECO:0000303"/>
    <property type="project" value="ComplexPortal"/>
</dbReference>
<dbReference type="GO" id="GO:0003677">
    <property type="term" value="F:DNA binding"/>
    <property type="evidence" value="ECO:0007669"/>
    <property type="project" value="InterPro"/>
</dbReference>
<dbReference type="GO" id="GO:1990238">
    <property type="term" value="F:double-stranded DNA endonuclease activity"/>
    <property type="evidence" value="ECO:0007669"/>
    <property type="project" value="Ensembl"/>
</dbReference>
<dbReference type="GO" id="GO:0006310">
    <property type="term" value="P:DNA recombination"/>
    <property type="evidence" value="ECO:0007669"/>
    <property type="project" value="UniProtKB-KW"/>
</dbReference>
<dbReference type="GO" id="GO:0006302">
    <property type="term" value="P:double-strand break repair"/>
    <property type="evidence" value="ECO:0000266"/>
    <property type="project" value="ComplexPortal"/>
</dbReference>
<dbReference type="GO" id="GO:0031297">
    <property type="term" value="P:replication fork processing"/>
    <property type="evidence" value="ECO:0000266"/>
    <property type="project" value="ComplexPortal"/>
</dbReference>
<dbReference type="GO" id="GO:0000723">
    <property type="term" value="P:telomere maintenance"/>
    <property type="evidence" value="ECO:0007669"/>
    <property type="project" value="Ensembl"/>
</dbReference>
<dbReference type="CDD" id="cd20082">
    <property type="entry name" value="XPF_nuclease_EME2"/>
    <property type="match status" value="1"/>
</dbReference>
<dbReference type="FunFam" id="1.10.150.670:FF:000002">
    <property type="entry name" value="Crossover junction endonuclease EME1"/>
    <property type="match status" value="1"/>
</dbReference>
<dbReference type="FunFam" id="3.40.50.10130:FF:000007">
    <property type="entry name" value="Probable crossover junction endonuclease EME2"/>
    <property type="match status" value="1"/>
</dbReference>
<dbReference type="Gene3D" id="3.40.50.10130">
    <property type="match status" value="1"/>
</dbReference>
<dbReference type="Gene3D" id="1.10.150.670">
    <property type="entry name" value="Crossover junction endonuclease EME1, DNA-binding domain"/>
    <property type="match status" value="1"/>
</dbReference>
<dbReference type="InterPro" id="IPR042530">
    <property type="entry name" value="EME1/EME2_C"/>
</dbReference>
<dbReference type="InterPro" id="IPR006166">
    <property type="entry name" value="ERCC4_domain"/>
</dbReference>
<dbReference type="InterPro" id="IPR033310">
    <property type="entry name" value="Mms4/EME1/EME2"/>
</dbReference>
<dbReference type="InterPro" id="IPR047523">
    <property type="entry name" value="XPF_nuclease_EME2"/>
</dbReference>
<dbReference type="PANTHER" id="PTHR21077:SF6">
    <property type="entry name" value="CROSSOVER JUNCTION ENDONUCLEASE EME2-RELATED"/>
    <property type="match status" value="1"/>
</dbReference>
<dbReference type="PANTHER" id="PTHR21077">
    <property type="entry name" value="EME1 PROTEIN"/>
    <property type="match status" value="1"/>
</dbReference>
<dbReference type="Pfam" id="PF21292">
    <property type="entry name" value="EME1-MUS81_C"/>
    <property type="match status" value="1"/>
</dbReference>
<dbReference type="Pfam" id="PF02732">
    <property type="entry name" value="ERCC4"/>
    <property type="match status" value="1"/>
</dbReference>
<dbReference type="SMART" id="SM00891">
    <property type="entry name" value="ERCC4"/>
    <property type="match status" value="1"/>
</dbReference>
<protein>
    <recommendedName>
        <fullName evidence="1">Structure-specific endonuclease subunit EME2</fullName>
    </recommendedName>
</protein>
<proteinExistence type="evidence at transcript level"/>
<sequence>MAEVGPGRVTVSRLGRGLRLGHRRPQTWEISDSDGEGVPAREVGTQAPSPAGERRAAAKALRADQVLGRLVVCVDPAVLEDAGSDILMEALGTLGCECRIEPQHQARSLQWNVVRPDPAPSNVPLEAKAENEQEQLLLLEPQEFLQGAAQLTQITDPPCSIPWLSPKSLTRSHLAVIGLDAYLWSHQLSSQKTWQLKKSKEAHARGAISWAEVEEILVLLQLHANLDVLLMASWQELSQYVCAFTRALSQLPSKQHRDSQAFSFCTAGHWASGQQVTRDGSGLRGVWWRQIRQFNRVSPAVADAVVTAFPSPRLLQQALLDCSTEQERLSLLADLPVKAHKGKQPRRVGPDLSRRICIFLTTTNPDLLLDLSS</sequence>
<gene>
    <name evidence="4" type="primary">Eme2</name>
</gene>
<name>EME2_MOUSE</name>
<feature type="chain" id="PRO_0000317374" description="Structure-specific endonuclease subunit EME2">
    <location>
        <begin position="1"/>
        <end position="373"/>
    </location>
</feature>
<feature type="region of interest" description="Disordered" evidence="2">
    <location>
        <begin position="24"/>
        <end position="52"/>
    </location>
</feature>
<feature type="region of interest" description="Nuclease-like domain; forms the post-nick DNA binding interface and is involved in DNA recognition and bending" evidence="1">
    <location>
        <begin position="47"/>
        <end position="260"/>
    </location>
</feature>
<feature type="region of interest" description="Helix-hairpin-helix (2HhH); forms the pre-nick DNA binding interface and is involved in DNA recognition and bending" evidence="1">
    <location>
        <begin position="282"/>
        <end position="373"/>
    </location>
</feature>
<reference key="1">
    <citation type="journal article" date="2009" name="PLoS Biol.">
        <title>Lineage-specific biology revealed by a finished genome assembly of the mouse.</title>
        <authorList>
            <person name="Church D.M."/>
            <person name="Goodstadt L."/>
            <person name="Hillier L.W."/>
            <person name="Zody M.C."/>
            <person name="Goldstein S."/>
            <person name="She X."/>
            <person name="Bult C.J."/>
            <person name="Agarwala R."/>
            <person name="Cherry J.L."/>
            <person name="DiCuccio M."/>
            <person name="Hlavina W."/>
            <person name="Kapustin Y."/>
            <person name="Meric P."/>
            <person name="Maglott D."/>
            <person name="Birtle Z."/>
            <person name="Marques A.C."/>
            <person name="Graves T."/>
            <person name="Zhou S."/>
            <person name="Teague B."/>
            <person name="Potamousis K."/>
            <person name="Churas C."/>
            <person name="Place M."/>
            <person name="Herschleb J."/>
            <person name="Runnheim R."/>
            <person name="Forrest D."/>
            <person name="Amos-Landgraf J."/>
            <person name="Schwartz D.C."/>
            <person name="Cheng Z."/>
            <person name="Lindblad-Toh K."/>
            <person name="Eichler E.E."/>
            <person name="Ponting C.P."/>
        </authorList>
    </citation>
    <scope>NUCLEOTIDE SEQUENCE [LARGE SCALE GENOMIC DNA]</scope>
    <source>
        <strain>C57BL/6J</strain>
    </source>
</reference>
<reference key="2">
    <citation type="journal article" date="2004" name="Genome Res.">
        <title>The status, quality, and expansion of the NIH full-length cDNA project: the Mammalian Gene Collection (MGC).</title>
        <authorList>
            <consortium name="The MGC Project Team"/>
        </authorList>
    </citation>
    <scope>NUCLEOTIDE SEQUENCE [LARGE SCALE MRNA] OF 3-373</scope>
    <source>
        <strain>C57BL/6J</strain>
        <tissue>Brain</tissue>
    </source>
</reference>
<keyword id="KW-0227">DNA damage</keyword>
<keyword id="KW-0233">DNA recombination</keyword>
<keyword id="KW-0234">DNA repair</keyword>
<keyword id="KW-0539">Nucleus</keyword>
<keyword id="KW-1185">Reference proteome</keyword>
<comment type="function">
    <text evidence="1">Non-catalytic subunit of the structure-specific, heterodimeric DNA endonuclease MUS81-EME2 which is involved in the maintenance of genome stability. In the complex, EME2 is required for DNA cleavage, participating in DNA recognition and bending. MUS81-EME2 cleaves 3'-flaps and nicked Holliday junctions, and exhibit limited endonuclease activity with 5' flaps and nicked double-stranded DNAs. MUS81-EME2 which is active during the replication of DNA is more specifically involved in replication fork processing. Replication forks frequently encounter obstacles to their passage, including DNA base lesions, DNA interstrand cross-links, difficult-to-replicate sequences, transcription bubbles, or tightly bound proteins. One mechanism for the restart of a stalled replication fork involves nucleolytic cleavage mediated by the MUS81-EME2 endonuclease. By acting upon the stalled fork, MUS81-EME2 generates a DNA double-strand break (DSB) that can be repaired by homologous recombination, leading to the restoration of an active fork. MUS81-EME2 could also function in telomere maintenance.</text>
</comment>
<comment type="subunit">
    <text evidence="1">Part of the heterodimeric MUS81-EME2 complex; the complex forms specifically during the DNA replication phase of the cell cycle.</text>
</comment>
<comment type="subcellular location">
    <subcellularLocation>
        <location evidence="1">Nucleus</location>
    </subcellularLocation>
</comment>
<comment type="similarity">
    <text evidence="3">Belongs to the EME1/MMS4 family.</text>
</comment>
<organism>
    <name type="scientific">Mus musculus</name>
    <name type="common">Mouse</name>
    <dbReference type="NCBI Taxonomy" id="10090"/>
    <lineage>
        <taxon>Eukaryota</taxon>
        <taxon>Metazoa</taxon>
        <taxon>Chordata</taxon>
        <taxon>Craniata</taxon>
        <taxon>Vertebrata</taxon>
        <taxon>Euteleostomi</taxon>
        <taxon>Mammalia</taxon>
        <taxon>Eutheria</taxon>
        <taxon>Euarchontoglires</taxon>
        <taxon>Glires</taxon>
        <taxon>Rodentia</taxon>
        <taxon>Myomorpha</taxon>
        <taxon>Muroidea</taxon>
        <taxon>Muridae</taxon>
        <taxon>Murinae</taxon>
        <taxon>Mus</taxon>
        <taxon>Mus</taxon>
    </lineage>
</organism>